<accession>P69641</accession>
<accession>P36457</accession>
<accession>P36460</accession>
<reference key="1">
    <citation type="journal article" date="1994" name="Plant Syst. Evol.">
        <title>The chloroplast gene rps4 as a tool for the study of Poaceae phylogeny.</title>
        <authorList>
            <person name="Nadot S."/>
            <person name="Bajon R."/>
            <person name="Lejeune B."/>
        </authorList>
        <dbReference type="AGRICOLA" id="IND20417698"/>
    </citation>
    <scope>NUCLEOTIDE SEQUENCE [GENOMIC DNA]</scope>
</reference>
<sequence length="196" mass="22690">MSRYRGPRLKKIRRLGALPGLTRKTPKSGSNLKKKFNSGKKEQYRIRLQEKQKLRFHYGLTERQLLRYVHIAGKAKRSTGQVLLQLLEMRLDNILFRLGMASTIPGARQLVNHRHILVNGRIVNIPSFRCKPRDIITTKDNQRSKGLVQNYIASSDPGKLPKHLTIDTLEYKGLVNKILDRKWVGLKINELLVVEY</sequence>
<geneLocation type="chloroplast"/>
<name>RR4_ELYCA</name>
<evidence type="ECO:0000250" key="1"/>
<evidence type="ECO:0000305" key="2"/>
<protein>
    <recommendedName>
        <fullName evidence="2">Small ribosomal subunit protein uS4c</fullName>
    </recommendedName>
    <alternativeName>
        <fullName>30S ribosomal protein S4, chloroplastic</fullName>
    </alternativeName>
</protein>
<gene>
    <name type="primary">rps4</name>
</gene>
<keyword id="KW-0150">Chloroplast</keyword>
<keyword id="KW-0934">Plastid</keyword>
<keyword id="KW-0687">Ribonucleoprotein</keyword>
<keyword id="KW-0689">Ribosomal protein</keyword>
<keyword id="KW-0694">RNA-binding</keyword>
<keyword id="KW-0699">rRNA-binding</keyword>
<feature type="chain" id="PRO_0000132571" description="Small ribosomal subunit protein uS4c">
    <location>
        <begin position="1"/>
        <end position="196" status="greater than"/>
    </location>
</feature>
<feature type="domain" description="S4 RNA-binding">
    <location>
        <begin position="89"/>
        <end position="157"/>
    </location>
</feature>
<feature type="non-terminal residue">
    <location>
        <position position="196"/>
    </location>
</feature>
<organism>
    <name type="scientific">Elymus canadensis</name>
    <name type="common">Canada wild rye</name>
    <dbReference type="NCBI Taxonomy" id="29675"/>
    <lineage>
        <taxon>Eukaryota</taxon>
        <taxon>Viridiplantae</taxon>
        <taxon>Streptophyta</taxon>
        <taxon>Embryophyta</taxon>
        <taxon>Tracheophyta</taxon>
        <taxon>Spermatophyta</taxon>
        <taxon>Magnoliopsida</taxon>
        <taxon>Liliopsida</taxon>
        <taxon>Poales</taxon>
        <taxon>Poaceae</taxon>
        <taxon>BOP clade</taxon>
        <taxon>Pooideae</taxon>
        <taxon>Triticodae</taxon>
        <taxon>Triticeae</taxon>
        <taxon>Hordeinae</taxon>
        <taxon>Elymus</taxon>
    </lineage>
</organism>
<proteinExistence type="inferred from homology"/>
<dbReference type="EMBL" id="Z29238">
    <property type="protein sequence ID" value="CAA82437.1"/>
    <property type="molecule type" value="Genomic_DNA"/>
</dbReference>
<dbReference type="PIR" id="S41265">
    <property type="entry name" value="S41265"/>
</dbReference>
<dbReference type="SMR" id="P69641"/>
<dbReference type="GO" id="GO:0009507">
    <property type="term" value="C:chloroplast"/>
    <property type="evidence" value="ECO:0007669"/>
    <property type="project" value="UniProtKB-SubCell"/>
</dbReference>
<dbReference type="GO" id="GO:0015935">
    <property type="term" value="C:small ribosomal subunit"/>
    <property type="evidence" value="ECO:0007669"/>
    <property type="project" value="InterPro"/>
</dbReference>
<dbReference type="GO" id="GO:0019843">
    <property type="term" value="F:rRNA binding"/>
    <property type="evidence" value="ECO:0007669"/>
    <property type="project" value="UniProtKB-KW"/>
</dbReference>
<dbReference type="GO" id="GO:0003735">
    <property type="term" value="F:structural constituent of ribosome"/>
    <property type="evidence" value="ECO:0007669"/>
    <property type="project" value="InterPro"/>
</dbReference>
<dbReference type="GO" id="GO:0042274">
    <property type="term" value="P:ribosomal small subunit biogenesis"/>
    <property type="evidence" value="ECO:0007669"/>
    <property type="project" value="TreeGrafter"/>
</dbReference>
<dbReference type="GO" id="GO:0006412">
    <property type="term" value="P:translation"/>
    <property type="evidence" value="ECO:0007669"/>
    <property type="project" value="InterPro"/>
</dbReference>
<dbReference type="CDD" id="cd00165">
    <property type="entry name" value="S4"/>
    <property type="match status" value="1"/>
</dbReference>
<dbReference type="FunFam" id="1.10.1050.10:FF:000002">
    <property type="entry name" value="30S ribosomal protein S4, chloroplastic"/>
    <property type="match status" value="1"/>
</dbReference>
<dbReference type="FunFam" id="3.10.290.10:FF:000081">
    <property type="entry name" value="30S ribosomal protein S4, chloroplastic"/>
    <property type="match status" value="1"/>
</dbReference>
<dbReference type="Gene3D" id="1.10.1050.10">
    <property type="entry name" value="Ribosomal Protein S4 Delta 41, Chain A, domain 1"/>
    <property type="match status" value="1"/>
</dbReference>
<dbReference type="Gene3D" id="3.10.290.10">
    <property type="entry name" value="RNA-binding S4 domain"/>
    <property type="match status" value="1"/>
</dbReference>
<dbReference type="HAMAP" id="MF_01306_B">
    <property type="entry name" value="Ribosomal_uS4_B"/>
    <property type="match status" value="1"/>
</dbReference>
<dbReference type="InterPro" id="IPR022801">
    <property type="entry name" value="Ribosomal_uS4"/>
</dbReference>
<dbReference type="InterPro" id="IPR005709">
    <property type="entry name" value="Ribosomal_uS4_bac-type"/>
</dbReference>
<dbReference type="InterPro" id="IPR018079">
    <property type="entry name" value="Ribosomal_uS4_CS"/>
</dbReference>
<dbReference type="InterPro" id="IPR001912">
    <property type="entry name" value="Ribosomal_uS4_N"/>
</dbReference>
<dbReference type="InterPro" id="IPR002942">
    <property type="entry name" value="S4_RNA-bd"/>
</dbReference>
<dbReference type="InterPro" id="IPR036986">
    <property type="entry name" value="S4_RNA-bd_sf"/>
</dbReference>
<dbReference type="NCBIfam" id="NF003717">
    <property type="entry name" value="PRK05327.1"/>
    <property type="match status" value="1"/>
</dbReference>
<dbReference type="NCBIfam" id="TIGR01017">
    <property type="entry name" value="rpsD_bact"/>
    <property type="match status" value="1"/>
</dbReference>
<dbReference type="PANTHER" id="PTHR11831">
    <property type="entry name" value="30S 40S RIBOSOMAL PROTEIN"/>
    <property type="match status" value="1"/>
</dbReference>
<dbReference type="PANTHER" id="PTHR11831:SF4">
    <property type="entry name" value="SMALL RIBOSOMAL SUBUNIT PROTEIN US4M"/>
    <property type="match status" value="1"/>
</dbReference>
<dbReference type="Pfam" id="PF00163">
    <property type="entry name" value="Ribosomal_S4"/>
    <property type="match status" value="1"/>
</dbReference>
<dbReference type="Pfam" id="PF01479">
    <property type="entry name" value="S4"/>
    <property type="match status" value="1"/>
</dbReference>
<dbReference type="SMART" id="SM01390">
    <property type="entry name" value="Ribosomal_S4"/>
    <property type="match status" value="1"/>
</dbReference>
<dbReference type="SMART" id="SM00363">
    <property type="entry name" value="S4"/>
    <property type="match status" value="1"/>
</dbReference>
<dbReference type="SUPFAM" id="SSF55174">
    <property type="entry name" value="Alpha-L RNA-binding motif"/>
    <property type="match status" value="1"/>
</dbReference>
<dbReference type="PROSITE" id="PS00632">
    <property type="entry name" value="RIBOSOMAL_S4"/>
    <property type="match status" value="1"/>
</dbReference>
<dbReference type="PROSITE" id="PS50889">
    <property type="entry name" value="S4"/>
    <property type="match status" value="1"/>
</dbReference>
<comment type="function">
    <text evidence="1">One of the primary rRNA binding proteins, it binds directly to 16S rRNA where it nucleates assembly of the body of the 30S subunit.</text>
</comment>
<comment type="function">
    <text evidence="1">With S5 and S12 plays an important role in translational accuracy.</text>
</comment>
<comment type="subunit">
    <text evidence="1">Part of the 30S ribosomal subunit. Contacts protein S5. The interaction surface between S4 and S5 is involved in control of translational fidelity (By similarity).</text>
</comment>
<comment type="subcellular location">
    <subcellularLocation>
        <location>Plastid</location>
        <location>Chloroplast</location>
    </subcellularLocation>
</comment>
<comment type="similarity">
    <text evidence="2">Belongs to the universal ribosomal protein uS4 family.</text>
</comment>